<name>YIDC_CAUSK</name>
<proteinExistence type="inferred from homology"/>
<accession>B0T872</accession>
<feature type="chain" id="PRO_1000187646" description="Membrane protein insertase YidC">
    <location>
        <begin position="1"/>
        <end position="630"/>
    </location>
</feature>
<feature type="transmembrane region" description="Helical" evidence="1">
    <location>
        <begin position="10"/>
        <end position="30"/>
    </location>
</feature>
<feature type="transmembrane region" description="Helical" evidence="1">
    <location>
        <begin position="396"/>
        <end position="416"/>
    </location>
</feature>
<feature type="transmembrane region" description="Helical" evidence="1">
    <location>
        <begin position="470"/>
        <end position="490"/>
    </location>
</feature>
<feature type="transmembrane region" description="Helical" evidence="1">
    <location>
        <begin position="528"/>
        <end position="548"/>
    </location>
</feature>
<feature type="transmembrane region" description="Helical" evidence="1">
    <location>
        <begin position="571"/>
        <end position="591"/>
    </location>
</feature>
<comment type="function">
    <text evidence="1">Required for the insertion and/or proper folding and/or complex formation of integral membrane proteins into the membrane. Involved in integration of membrane proteins that insert both dependently and independently of the Sec translocase complex, as well as at least some lipoproteins. Aids folding of multispanning membrane proteins.</text>
</comment>
<comment type="subunit">
    <text evidence="1">Interacts with the Sec translocase complex via SecD. Specifically interacts with transmembrane segments of nascent integral membrane proteins during membrane integration.</text>
</comment>
<comment type="subcellular location">
    <subcellularLocation>
        <location evidence="1">Cell inner membrane</location>
        <topology evidence="1">Multi-pass membrane protein</topology>
    </subcellularLocation>
</comment>
<comment type="similarity">
    <text evidence="1">Belongs to the OXA1/ALB3/YidC family. Type 1 subfamily.</text>
</comment>
<keyword id="KW-0997">Cell inner membrane</keyword>
<keyword id="KW-1003">Cell membrane</keyword>
<keyword id="KW-0143">Chaperone</keyword>
<keyword id="KW-0472">Membrane</keyword>
<keyword id="KW-0653">Protein transport</keyword>
<keyword id="KW-0812">Transmembrane</keyword>
<keyword id="KW-1133">Transmembrane helix</keyword>
<keyword id="KW-0813">Transport</keyword>
<protein>
    <recommendedName>
        <fullName evidence="1">Membrane protein insertase YidC</fullName>
    </recommendedName>
    <alternativeName>
        <fullName evidence="1">Foldase YidC</fullName>
    </alternativeName>
    <alternativeName>
        <fullName evidence="1">Membrane integrase YidC</fullName>
    </alternativeName>
    <alternativeName>
        <fullName evidence="1">Membrane protein YidC</fullName>
    </alternativeName>
</protein>
<gene>
    <name evidence="1" type="primary">yidC</name>
    <name type="ordered locus">Caul_0640</name>
</gene>
<reference key="1">
    <citation type="submission" date="2008-01" db="EMBL/GenBank/DDBJ databases">
        <title>Complete sequence of chromosome of Caulobacter sp. K31.</title>
        <authorList>
            <consortium name="US DOE Joint Genome Institute"/>
            <person name="Copeland A."/>
            <person name="Lucas S."/>
            <person name="Lapidus A."/>
            <person name="Barry K."/>
            <person name="Glavina del Rio T."/>
            <person name="Dalin E."/>
            <person name="Tice H."/>
            <person name="Pitluck S."/>
            <person name="Bruce D."/>
            <person name="Goodwin L."/>
            <person name="Thompson L.S."/>
            <person name="Brettin T."/>
            <person name="Detter J.C."/>
            <person name="Han C."/>
            <person name="Schmutz J."/>
            <person name="Larimer F."/>
            <person name="Land M."/>
            <person name="Hauser L."/>
            <person name="Kyrpides N."/>
            <person name="Kim E."/>
            <person name="Stephens C."/>
            <person name="Richardson P."/>
        </authorList>
    </citation>
    <scope>NUCLEOTIDE SEQUENCE [LARGE SCALE GENOMIC DNA]</scope>
    <source>
        <strain>K31</strain>
    </source>
</reference>
<organism>
    <name type="scientific">Caulobacter sp. (strain K31)</name>
    <dbReference type="NCBI Taxonomy" id="366602"/>
    <lineage>
        <taxon>Bacteria</taxon>
        <taxon>Pseudomonadati</taxon>
        <taxon>Pseudomonadota</taxon>
        <taxon>Alphaproteobacteria</taxon>
        <taxon>Caulobacterales</taxon>
        <taxon>Caulobacteraceae</taxon>
        <taxon>Caulobacter</taxon>
    </lineage>
</organism>
<evidence type="ECO:0000255" key="1">
    <source>
        <dbReference type="HAMAP-Rule" id="MF_01810"/>
    </source>
</evidence>
<dbReference type="EMBL" id="CP000927">
    <property type="protein sequence ID" value="ABZ69773.1"/>
    <property type="molecule type" value="Genomic_DNA"/>
</dbReference>
<dbReference type="SMR" id="B0T872"/>
<dbReference type="STRING" id="366602.Caul_0640"/>
<dbReference type="KEGG" id="cak:Caul_0640"/>
<dbReference type="eggNOG" id="COG0706">
    <property type="taxonomic scope" value="Bacteria"/>
</dbReference>
<dbReference type="HOGENOM" id="CLU_016535_1_0_5"/>
<dbReference type="OrthoDB" id="9780552at2"/>
<dbReference type="GO" id="GO:0005886">
    <property type="term" value="C:plasma membrane"/>
    <property type="evidence" value="ECO:0007669"/>
    <property type="project" value="UniProtKB-SubCell"/>
</dbReference>
<dbReference type="GO" id="GO:0032977">
    <property type="term" value="F:membrane insertase activity"/>
    <property type="evidence" value="ECO:0007669"/>
    <property type="project" value="InterPro"/>
</dbReference>
<dbReference type="GO" id="GO:0051205">
    <property type="term" value="P:protein insertion into membrane"/>
    <property type="evidence" value="ECO:0007669"/>
    <property type="project" value="TreeGrafter"/>
</dbReference>
<dbReference type="GO" id="GO:0015031">
    <property type="term" value="P:protein transport"/>
    <property type="evidence" value="ECO:0007669"/>
    <property type="project" value="UniProtKB-KW"/>
</dbReference>
<dbReference type="CDD" id="cd20070">
    <property type="entry name" value="5TM_YidC_Alb3"/>
    <property type="match status" value="1"/>
</dbReference>
<dbReference type="CDD" id="cd19961">
    <property type="entry name" value="EcYidC-like_peri"/>
    <property type="match status" value="1"/>
</dbReference>
<dbReference type="Gene3D" id="2.70.98.90">
    <property type="match status" value="1"/>
</dbReference>
<dbReference type="HAMAP" id="MF_01810">
    <property type="entry name" value="YidC_type1"/>
    <property type="match status" value="1"/>
</dbReference>
<dbReference type="InterPro" id="IPR019998">
    <property type="entry name" value="Membr_insert_YidC"/>
</dbReference>
<dbReference type="InterPro" id="IPR028053">
    <property type="entry name" value="Membr_insert_YidC_N"/>
</dbReference>
<dbReference type="InterPro" id="IPR001708">
    <property type="entry name" value="YidC/ALB3/OXA1/COX18"/>
</dbReference>
<dbReference type="InterPro" id="IPR028055">
    <property type="entry name" value="YidC/Oxa/ALB_C"/>
</dbReference>
<dbReference type="InterPro" id="IPR047196">
    <property type="entry name" value="YidC_ALB_C"/>
</dbReference>
<dbReference type="InterPro" id="IPR038221">
    <property type="entry name" value="YidC_periplasmic_sf"/>
</dbReference>
<dbReference type="NCBIfam" id="NF002353">
    <property type="entry name" value="PRK01318.1-4"/>
    <property type="match status" value="1"/>
</dbReference>
<dbReference type="NCBIfam" id="TIGR03593">
    <property type="entry name" value="yidC_nterm"/>
    <property type="match status" value="1"/>
</dbReference>
<dbReference type="NCBIfam" id="TIGR03592">
    <property type="entry name" value="yidC_oxa1_cterm"/>
    <property type="match status" value="1"/>
</dbReference>
<dbReference type="PANTHER" id="PTHR12428:SF65">
    <property type="entry name" value="CYTOCHROME C OXIDASE ASSEMBLY PROTEIN COX18, MITOCHONDRIAL"/>
    <property type="match status" value="1"/>
</dbReference>
<dbReference type="PANTHER" id="PTHR12428">
    <property type="entry name" value="OXA1"/>
    <property type="match status" value="1"/>
</dbReference>
<dbReference type="Pfam" id="PF02096">
    <property type="entry name" value="60KD_IMP"/>
    <property type="match status" value="1"/>
</dbReference>
<dbReference type="Pfam" id="PF14849">
    <property type="entry name" value="YidC_periplas"/>
    <property type="match status" value="1"/>
</dbReference>
<dbReference type="PRINTS" id="PR01900">
    <property type="entry name" value="YIDCPROTEIN"/>
</dbReference>
<sequence length="630" mass="69741">MQNDSNKNTLMFLVCAFAILIGYQFLVMGPQQKQREAELRAKKAAEAQVAVQPGMTIGADGTPQPLKLSRDEAKAQSPRIAVDTPALSGSIALKGARIDDLWLKRYTQTADKNSPPVELFRPEGAEHAWFADFGWAGIAGMTGLPTPQTVWTAAPGQVLRPTTPVVLTYDNGQGLVFTRTISVDADAMFTVADTVRNQGGAAVALAPYASVQRQGIPTEGPHGLGKTQIVYEGGIGVLGGIDGVEGGKYILQNKAKYPKWKKDKPLQDNLQSKGGWIGMTDKYWLAALVPQQSEMIKGRFQVKPVSGVDVYESAFTGAPKSLAAGATVTNTTRLFAGAKTVPLLTRYQYGGKPVVWWEFWNRPANVIPNFDKAVDWGMFEVITRPIFNVLEIFYKMVGNFGVAIMLLTVALKLILFPLADKSYESMAKMKKIAPEVEKLKVKNKDDPAKQQQEMMALYAKEKINPMMGCVPMLIQIPIFYSLYKVLTVTIEMRHAPFFGWITDLSARDPSTFMNLFGLIHWDPATAPLIGAFLSGPLHIGVWPLLYGFTMWLTTAMNPPAGDPIQQKIFQFFPIVFTFTLSQFAVGLVIYWCWSNVLTILQQYIIMHRYKVDNPIDQLVNRLRGKTVEAT</sequence>